<feature type="peptide" id="PRO_0000043805" description="Hylin-b2">
    <location>
        <begin position="1"/>
        <end position="19"/>
    </location>
</feature>
<feature type="modified residue" description="Arginine amide" evidence="1">
    <location>
        <position position="19"/>
    </location>
</feature>
<sequence>FIGAILPAIAGLVGGLINR</sequence>
<name>HYB2_BOALU</name>
<proteinExistence type="evidence at protein level"/>
<comment type="function">
    <text evidence="1 2">Has hemolytic activity against human erythrocytes. May have antimicrobial activity.</text>
</comment>
<comment type="subcellular location">
    <subcellularLocation>
        <location evidence="1">Secreted</location>
    </subcellularLocation>
</comment>
<comment type="tissue specificity">
    <text evidence="1">Expressed by the skin glands.</text>
</comment>
<comment type="mass spectrometry"/>
<organism>
    <name type="scientific">Boana lundii</name>
    <name type="common">Brazilian tree frog</name>
    <name type="synonym">Hypsiboas lundii</name>
    <dbReference type="NCBI Taxonomy" id="2517092"/>
    <lineage>
        <taxon>Eukaryota</taxon>
        <taxon>Metazoa</taxon>
        <taxon>Chordata</taxon>
        <taxon>Craniata</taxon>
        <taxon>Vertebrata</taxon>
        <taxon>Euteleostomi</taxon>
        <taxon>Amphibia</taxon>
        <taxon>Batrachia</taxon>
        <taxon>Anura</taxon>
        <taxon>Neobatrachia</taxon>
        <taxon>Hyloidea</taxon>
        <taxon>Hylidae</taxon>
        <taxon>Hylinae</taxon>
        <taxon>Cophomantini</taxon>
        <taxon>Boana</taxon>
    </lineage>
</organism>
<protein>
    <recommendedName>
        <fullName>Hylin-b2</fullName>
        <shortName>Hy-b2</shortName>
    </recommendedName>
</protein>
<keyword id="KW-0027">Amidation</keyword>
<keyword id="KW-0878">Amphibian defense peptide</keyword>
<keyword id="KW-0204">Cytolysis</keyword>
<keyword id="KW-0903">Direct protein sequencing</keyword>
<keyword id="KW-0354">Hemolysis</keyword>
<keyword id="KW-0964">Secreted</keyword>
<reference evidence="3" key="1">
    <citation type="journal article" date="2005" name="Protein Pept. Lett.">
        <title>Hylins: bombinins H structurally related peptides from the skin secretion of the Brazilian tree-frog Hyla biobeba.</title>
        <authorList>
            <person name="Castro M.S."/>
            <person name="Matsushita R.H."/>
            <person name="Sebben A."/>
            <person name="Sousa M.V."/>
            <person name="Fontes W."/>
        </authorList>
    </citation>
    <scope>PROTEIN SEQUENCE</scope>
    <scope>FUNCTION</scope>
    <scope>SUBCELLULAR LOCATION</scope>
    <scope>TISSUE SPECIFICITY</scope>
    <scope>MASS SPECTROMETRY</scope>
    <scope>AMIDATION AT ARG-19</scope>
    <source>
        <tissue evidence="1">Skin secretion</tissue>
    </source>
</reference>
<evidence type="ECO:0000269" key="1">
    <source>
    </source>
</evidence>
<evidence type="ECO:0000303" key="2">
    <source>
    </source>
</evidence>
<evidence type="ECO:0000305" key="3"/>
<accession>P84003</accession>
<dbReference type="GO" id="GO:0005576">
    <property type="term" value="C:extracellular region"/>
    <property type="evidence" value="ECO:0000314"/>
    <property type="project" value="UniProtKB"/>
</dbReference>
<dbReference type="GO" id="GO:0006952">
    <property type="term" value="P:defense response"/>
    <property type="evidence" value="ECO:0007669"/>
    <property type="project" value="UniProtKB-KW"/>
</dbReference>
<dbReference type="GO" id="GO:0044179">
    <property type="term" value="P:hemolysis in another organism"/>
    <property type="evidence" value="ECO:0000314"/>
    <property type="project" value="UniProtKB"/>
</dbReference>